<keyword id="KW-0025">Alternative splicing</keyword>
<keyword id="KW-0158">Chromosome</keyword>
<keyword id="KW-0469">Meiosis</keyword>
<keyword id="KW-0539">Nucleus</keyword>
<keyword id="KW-0597">Phosphoprotein</keyword>
<keyword id="KW-1185">Reference proteome</keyword>
<dbReference type="EMBL" id="BC120469">
    <property type="protein sequence ID" value="AAI20470.1"/>
    <property type="molecule type" value="mRNA"/>
</dbReference>
<dbReference type="EMBL" id="BC150041">
    <property type="protein sequence ID" value="AAI50042.1"/>
    <property type="molecule type" value="mRNA"/>
</dbReference>
<dbReference type="RefSeq" id="NP_001071611.1">
    <molecule id="A6QQY4-2"/>
    <property type="nucleotide sequence ID" value="NM_001078143.2"/>
</dbReference>
<dbReference type="SMR" id="A6QQY4"/>
<dbReference type="FunCoup" id="A6QQY4">
    <property type="interactions" value="40"/>
</dbReference>
<dbReference type="STRING" id="9913.ENSBTAP00000029451"/>
<dbReference type="PaxDb" id="9913-ENSBTAP00000029451"/>
<dbReference type="GeneID" id="777596"/>
<dbReference type="KEGG" id="bta:777596"/>
<dbReference type="CTD" id="150280"/>
<dbReference type="eggNOG" id="KOG4652">
    <property type="taxonomic scope" value="Eukaryota"/>
</dbReference>
<dbReference type="InParanoid" id="A6QQY4"/>
<dbReference type="OrthoDB" id="1928087at2759"/>
<dbReference type="Proteomes" id="UP000009136">
    <property type="component" value="Unplaced"/>
</dbReference>
<dbReference type="GO" id="GO:0005694">
    <property type="term" value="C:chromosome"/>
    <property type="evidence" value="ECO:0000250"/>
    <property type="project" value="UniProtKB"/>
</dbReference>
<dbReference type="GO" id="GO:0005634">
    <property type="term" value="C:nucleus"/>
    <property type="evidence" value="ECO:0000250"/>
    <property type="project" value="UniProtKB"/>
</dbReference>
<dbReference type="GO" id="GO:0051321">
    <property type="term" value="P:meiotic cell cycle"/>
    <property type="evidence" value="ECO:0000250"/>
    <property type="project" value="UniProtKB"/>
</dbReference>
<dbReference type="GO" id="GO:0051177">
    <property type="term" value="P:meiotic sister chromatid cohesion"/>
    <property type="evidence" value="ECO:0000250"/>
    <property type="project" value="UniProtKB"/>
</dbReference>
<dbReference type="FunFam" id="3.30.900.10:FF:000006">
    <property type="entry name" value="HORMA domain-containing protein 1"/>
    <property type="match status" value="1"/>
</dbReference>
<dbReference type="Gene3D" id="3.30.900.10">
    <property type="entry name" value="HORMA domain"/>
    <property type="match status" value="1"/>
</dbReference>
<dbReference type="InterPro" id="IPR003511">
    <property type="entry name" value="HORMA_dom"/>
</dbReference>
<dbReference type="InterPro" id="IPR036570">
    <property type="entry name" value="HORMA_dom_sf"/>
</dbReference>
<dbReference type="InterPro" id="IPR051294">
    <property type="entry name" value="HORMA_MeioticProgression"/>
</dbReference>
<dbReference type="PANTHER" id="PTHR48225">
    <property type="entry name" value="HORMA DOMAIN-CONTAINING PROTEIN 1"/>
    <property type="match status" value="1"/>
</dbReference>
<dbReference type="PANTHER" id="PTHR48225:SF6">
    <property type="entry name" value="HORMA DOMAIN-CONTAINING PROTEIN 2"/>
    <property type="match status" value="1"/>
</dbReference>
<dbReference type="Pfam" id="PF02301">
    <property type="entry name" value="HORMA"/>
    <property type="match status" value="1"/>
</dbReference>
<dbReference type="SUPFAM" id="SSF56019">
    <property type="entry name" value="The spindle assembly checkpoint protein mad2"/>
    <property type="match status" value="1"/>
</dbReference>
<dbReference type="PROSITE" id="PS50815">
    <property type="entry name" value="HORMA"/>
    <property type="match status" value="1"/>
</dbReference>
<accession>A6QQY4</accession>
<accession>Q0VBW9</accession>
<protein>
    <recommendedName>
        <fullName>HORMA domain-containing protein 2</fullName>
    </recommendedName>
</protein>
<organism>
    <name type="scientific">Bos taurus</name>
    <name type="common">Bovine</name>
    <dbReference type="NCBI Taxonomy" id="9913"/>
    <lineage>
        <taxon>Eukaryota</taxon>
        <taxon>Metazoa</taxon>
        <taxon>Chordata</taxon>
        <taxon>Craniata</taxon>
        <taxon>Vertebrata</taxon>
        <taxon>Euteleostomi</taxon>
        <taxon>Mammalia</taxon>
        <taxon>Eutheria</taxon>
        <taxon>Laurasiatheria</taxon>
        <taxon>Artiodactyla</taxon>
        <taxon>Ruminantia</taxon>
        <taxon>Pecora</taxon>
        <taxon>Bovidae</taxon>
        <taxon>Bovinae</taxon>
        <taxon>Bos</taxon>
    </lineage>
</organism>
<gene>
    <name type="primary">HORMAD2</name>
</gene>
<reference key="1">
    <citation type="submission" date="2007-07" db="EMBL/GenBank/DDBJ databases">
        <authorList>
            <consortium name="NIH - Mammalian Gene Collection (MGC) project"/>
        </authorList>
    </citation>
    <scope>NUCLEOTIDE SEQUENCE [LARGE SCALE MRNA] (ISOFORMS 1 AND 2)</scope>
    <source>
        <strain>Crossbred X Angus</strain>
        <tissue>Liver</tissue>
    </source>
</reference>
<name>HORM2_BOVIN</name>
<feature type="chain" id="PRO_0000410915" description="HORMA domain-containing protein 2">
    <location>
        <begin position="1"/>
        <end position="306"/>
    </location>
</feature>
<feature type="domain" description="HORMA" evidence="2">
    <location>
        <begin position="29"/>
        <end position="232"/>
    </location>
</feature>
<feature type="splice variant" id="VSP_041564" description="In isoform 2." evidence="3">
    <location>
        <begin position="1"/>
        <end position="100"/>
    </location>
</feature>
<evidence type="ECO:0000250" key="1"/>
<evidence type="ECO:0000255" key="2">
    <source>
        <dbReference type="PROSITE-ProRule" id="PRU00109"/>
    </source>
</evidence>
<evidence type="ECO:0000303" key="3">
    <source ref="1"/>
</evidence>
<proteinExistence type="evidence at transcript level"/>
<sequence>MATVQLSRSIRIRKTSKKTVFPSQITNEHESLIMVKKLFATSISCITYLRGLFPESSYGERHLDDLSLKILREDKKCPGSLHIIKWIQGCFDALEKRYLRMAVLTLYTNPKEPEKVTEIYQFKFKYTKEGATMDFDSSNTSFKSGTNSEDIKKASVLLIRKLYMLMQNLGPLPNDVILTMTLHYYNAVTPNDYQPPGFKEGVSSHLLLFEGEPVNLQVGMVSTGFHSMKVKVTTEATRVSDLESSLFQESGTTEIAHQGLDCDEEEEECNTEIQKMNFVCSQQSSERSRKKRKVSEPVKVFIPDRK</sequence>
<comment type="function">
    <text evidence="1">Essential for synapsis surveillance during meiotic prophase via the recruitment of ATR activity. Plays a key role in the male mid-pachytene checkpoint and the female meiotic prophase checkpoint: required for efficient build-up of ATR activity on unsynapsed chromosome regions, a process believed to form the basis of meiotic silencing of unsynapsed chromatin (MSUC) and meiotic prophase quality control in both sexes. Required for the DNA double-strand break-independent, BRCA1-dependent activation of ATR on the sex chromosomes that is essential for normal sex body formation (By similarity).</text>
</comment>
<comment type="subunit">
    <text evidence="1">Interacts with HORMAD1.</text>
</comment>
<comment type="subcellular location">
    <subcellularLocation>
        <location evidence="1">Nucleus</location>
    </subcellularLocation>
    <subcellularLocation>
        <location evidence="1">Chromosome</location>
    </subcellularLocation>
    <text evidence="1">Preferentially localizes to unsynapsed or desynapsed chromosomal regions during the male and female prophase I stage of meiosis. TRIP13 is required for depletion from synapsed chromosomes (By similarity).</text>
</comment>
<comment type="alternative products">
    <event type="alternative splicing"/>
    <isoform>
        <id>A6QQY4-1</id>
        <name>1</name>
        <sequence type="displayed"/>
    </isoform>
    <isoform>
        <id>A6QQY4-2</id>
        <name>2</name>
        <sequence type="described" ref="VSP_041564"/>
    </isoform>
</comment>
<comment type="PTM">
    <text evidence="1">Phosphorylated in a SPO11-dependent manner.</text>
</comment>